<name>DABA1_BRASB</name>
<reference key="1">
    <citation type="journal article" date="2007" name="Science">
        <title>Legumes symbioses: absence of nod genes in photosynthetic bradyrhizobia.</title>
        <authorList>
            <person name="Giraud E."/>
            <person name="Moulin L."/>
            <person name="Vallenet D."/>
            <person name="Barbe V."/>
            <person name="Cytryn E."/>
            <person name="Avarre J.-C."/>
            <person name="Jaubert M."/>
            <person name="Simon D."/>
            <person name="Cartieaux F."/>
            <person name="Prin Y."/>
            <person name="Bena G."/>
            <person name="Hannibal L."/>
            <person name="Fardoux J."/>
            <person name="Kojadinovic M."/>
            <person name="Vuillet L."/>
            <person name="Lajus A."/>
            <person name="Cruveiller S."/>
            <person name="Rouy Z."/>
            <person name="Mangenot S."/>
            <person name="Segurens B."/>
            <person name="Dossat C."/>
            <person name="Franck W.L."/>
            <person name="Chang W.-S."/>
            <person name="Saunders E."/>
            <person name="Bruce D."/>
            <person name="Richardson P."/>
            <person name="Normand P."/>
            <person name="Dreyfus B."/>
            <person name="Pignol D."/>
            <person name="Stacey G."/>
            <person name="Emerich D."/>
            <person name="Vermeglio A."/>
            <person name="Medigue C."/>
            <person name="Sadowsky M."/>
        </authorList>
    </citation>
    <scope>NUCLEOTIDE SEQUENCE [LARGE SCALE GENOMIC DNA]</scope>
    <source>
        <strain>BTAi1 / ATCC BAA-1182</strain>
    </source>
</reference>
<keyword id="KW-0997">Cell inner membrane</keyword>
<keyword id="KW-1003">Cell membrane</keyword>
<keyword id="KW-0472">Membrane</keyword>
<keyword id="KW-0479">Metal-binding</keyword>
<keyword id="KW-1185">Reference proteome</keyword>
<keyword id="KW-0813">Transport</keyword>
<keyword id="KW-0862">Zinc</keyword>
<feature type="chain" id="PRO_0000387252" description="Probable inorganic carbon transporter subunit DabA 1">
    <location>
        <begin position="1"/>
        <end position="844"/>
    </location>
</feature>
<feature type="binding site" evidence="1">
    <location>
        <position position="359"/>
    </location>
    <ligand>
        <name>Zn(2+)</name>
        <dbReference type="ChEBI" id="CHEBI:29105"/>
    </ligand>
</feature>
<feature type="binding site" evidence="1">
    <location>
        <position position="361"/>
    </location>
    <ligand>
        <name>Zn(2+)</name>
        <dbReference type="ChEBI" id="CHEBI:29105"/>
    </ligand>
</feature>
<feature type="binding site" evidence="1">
    <location>
        <position position="543"/>
    </location>
    <ligand>
        <name>Zn(2+)</name>
        <dbReference type="ChEBI" id="CHEBI:29105"/>
    </ligand>
</feature>
<feature type="binding site" evidence="1">
    <location>
        <position position="558"/>
    </location>
    <ligand>
        <name>Zn(2+)</name>
        <dbReference type="ChEBI" id="CHEBI:29105"/>
    </ligand>
</feature>
<protein>
    <recommendedName>
        <fullName evidence="1">Probable inorganic carbon transporter subunit DabA 1</fullName>
    </recommendedName>
</protein>
<organism>
    <name type="scientific">Bradyrhizobium sp. (strain BTAi1 / ATCC BAA-1182)</name>
    <dbReference type="NCBI Taxonomy" id="288000"/>
    <lineage>
        <taxon>Bacteria</taxon>
        <taxon>Pseudomonadati</taxon>
        <taxon>Pseudomonadota</taxon>
        <taxon>Alphaproteobacteria</taxon>
        <taxon>Hyphomicrobiales</taxon>
        <taxon>Nitrobacteraceae</taxon>
        <taxon>Bradyrhizobium</taxon>
    </lineage>
</organism>
<accession>A5EBS0</accession>
<evidence type="ECO:0000255" key="1">
    <source>
        <dbReference type="HAMAP-Rule" id="MF_01871"/>
    </source>
</evidence>
<dbReference type="EMBL" id="CP000494">
    <property type="protein sequence ID" value="ABQ33614.1"/>
    <property type="molecule type" value="Genomic_DNA"/>
</dbReference>
<dbReference type="RefSeq" id="WP_012041656.1">
    <property type="nucleotide sequence ID" value="NC_009485.1"/>
</dbReference>
<dbReference type="STRING" id="288000.BBta_1381"/>
<dbReference type="KEGG" id="bbt:BBta_1381"/>
<dbReference type="eggNOG" id="COG3002">
    <property type="taxonomic scope" value="Bacteria"/>
</dbReference>
<dbReference type="HOGENOM" id="CLU_009885_0_0_5"/>
<dbReference type="OrthoDB" id="9805101at2"/>
<dbReference type="Proteomes" id="UP000000246">
    <property type="component" value="Chromosome"/>
</dbReference>
<dbReference type="GO" id="GO:0005886">
    <property type="term" value="C:plasma membrane"/>
    <property type="evidence" value="ECO:0007669"/>
    <property type="project" value="UniProtKB-SubCell"/>
</dbReference>
<dbReference type="GO" id="GO:0008270">
    <property type="term" value="F:zinc ion binding"/>
    <property type="evidence" value="ECO:0007669"/>
    <property type="project" value="UniProtKB-UniRule"/>
</dbReference>
<dbReference type="HAMAP" id="MF_01871">
    <property type="entry name" value="DabA"/>
    <property type="match status" value="1"/>
</dbReference>
<dbReference type="InterPro" id="IPR018752">
    <property type="entry name" value="DabA"/>
</dbReference>
<dbReference type="PANTHER" id="PTHR38344:SF1">
    <property type="entry name" value="INORGANIC CARBON TRANSPORTER SUBUNIT DABA-RELATED"/>
    <property type="match status" value="1"/>
</dbReference>
<dbReference type="PANTHER" id="PTHR38344">
    <property type="entry name" value="UPF0753 PROTEIN AQ_863"/>
    <property type="match status" value="1"/>
</dbReference>
<dbReference type="Pfam" id="PF10070">
    <property type="entry name" value="DabA"/>
    <property type="match status" value="1"/>
</dbReference>
<gene>
    <name evidence="1" type="primary">dabA1</name>
    <name type="ordered locus">BBta_1381</name>
</gene>
<proteinExistence type="inferred from homology"/>
<comment type="function">
    <text evidence="1">Part of an energy-coupled inorganic carbon pump.</text>
</comment>
<comment type="cofactor">
    <cofactor evidence="1">
        <name>Zn(2+)</name>
        <dbReference type="ChEBI" id="CHEBI:29105"/>
    </cofactor>
</comment>
<comment type="subunit">
    <text evidence="1">Forms a complex with DabB.</text>
</comment>
<comment type="subcellular location">
    <subcellularLocation>
        <location evidence="1">Cell inner membrane</location>
        <topology evidence="1">Peripheral membrane protein</topology>
    </subcellularLocation>
</comment>
<comment type="similarity">
    <text evidence="1">Belongs to the inorganic carbon transporter (TC 9.A.2) DabA family.</text>
</comment>
<sequence length="844" mass="90772">MTQAALAMSITATDPVDTATDARLKECIDSACQRVAPLWPLKHFVAVNPFLGFTGQSFAATAATFERVVRTRILMPRAFYRQALDDGRIDDAALARALDIHPSVGLGVEQLKQQARATAAPSSPPAVVATVAEVLDRLAEGDRYVSLVAFMIDEISAFCAGYFDEGQASWPSPVRSLKPYAAWRRLAAYDRNPEVMGLTGFRNAIAELPADPVQAIGLIITRLGIPERAVEDYLVRALFDIGGWSAYARYIGWSAERDGQRDDTLVELLAIRLAWGYALFQARTDAAFKIAWAQAMEEAAKLPDDQRLDDTPELAVDLVLHEAYEIAIRNQLIARLAGHGTGAAVARLPARPPVQAAFCIDVRSEIFRRALETAYPEAETIGFAGFFGFPIEYVPIGHTRGGAQCPVLLKPAFIVCEAVKDADDVEQAEVLGLRLLRRRAAKAWKSFKVSAVSSFSFVETAGLGFAAKIATDSAGVTRPVPSPVVDGLDPEIAARVMPRLAPGELGGRVTGFNDVQRVAMAEAALKAMSLTGPFARLVLLAGHGSTTVNNPHASGLDCGACGGHTGEANARVAAAVLNDPRVRDGLRAKGIDIPADCWFLGALHDTTTDAVTVFDEDDVPAALAQDLARLKARLADAARLARLERSALLGIPDKSAVDAAVIARSRDWSQVRPEWGLAGNCAFIAAPRSFTRGLDLGGRAFLHSYEAERDDGHRTLELIMTAPMVVANWINLQYFGSTVNNAAFGSGNKVLHNIVGQLGVLEGNAGDLRVGLPWQSVHDGTRLVHEPVRLNVFIAAPESAMDEIMQRQPGVRDLVVNGWVMLHSLGDHGTTIRRCVSPGVWIAA</sequence>